<name>WHIA_CLOBK</name>
<dbReference type="EMBL" id="CP000939">
    <property type="protein sequence ID" value="ACA44989.1"/>
    <property type="molecule type" value="Genomic_DNA"/>
</dbReference>
<dbReference type="RefSeq" id="WP_003357358.1">
    <property type="nucleotide sequence ID" value="NC_010516.1"/>
</dbReference>
<dbReference type="SMR" id="B1IFW1"/>
<dbReference type="GeneID" id="5187629"/>
<dbReference type="KEGG" id="cbb:CLD_1133"/>
<dbReference type="HOGENOM" id="CLU_053282_0_0_9"/>
<dbReference type="Proteomes" id="UP000008541">
    <property type="component" value="Chromosome"/>
</dbReference>
<dbReference type="GO" id="GO:0003677">
    <property type="term" value="F:DNA binding"/>
    <property type="evidence" value="ECO:0007669"/>
    <property type="project" value="UniProtKB-UniRule"/>
</dbReference>
<dbReference type="GO" id="GO:0004519">
    <property type="term" value="F:endonuclease activity"/>
    <property type="evidence" value="ECO:0007669"/>
    <property type="project" value="InterPro"/>
</dbReference>
<dbReference type="GO" id="GO:0051301">
    <property type="term" value="P:cell division"/>
    <property type="evidence" value="ECO:0007669"/>
    <property type="project" value="UniProtKB-UniRule"/>
</dbReference>
<dbReference type="GO" id="GO:0043937">
    <property type="term" value="P:regulation of sporulation"/>
    <property type="evidence" value="ECO:0007669"/>
    <property type="project" value="InterPro"/>
</dbReference>
<dbReference type="Gene3D" id="3.10.28.10">
    <property type="entry name" value="Homing endonucleases"/>
    <property type="match status" value="1"/>
</dbReference>
<dbReference type="HAMAP" id="MF_01420">
    <property type="entry name" value="HTH_type_WhiA"/>
    <property type="match status" value="1"/>
</dbReference>
<dbReference type="InterPro" id="IPR027434">
    <property type="entry name" value="Homing_endonucl"/>
</dbReference>
<dbReference type="InterPro" id="IPR004042">
    <property type="entry name" value="Intein_endonuc_central"/>
</dbReference>
<dbReference type="InterPro" id="IPR018478">
    <property type="entry name" value="Sporu_reg_WhiA_N_dom"/>
</dbReference>
<dbReference type="InterPro" id="IPR003802">
    <property type="entry name" value="Sporulation_regulator_WhiA"/>
</dbReference>
<dbReference type="InterPro" id="IPR023054">
    <property type="entry name" value="Sporulation_regulator_WhiA_C"/>
</dbReference>
<dbReference type="InterPro" id="IPR039518">
    <property type="entry name" value="WhiA_LAGLIDADG_dom"/>
</dbReference>
<dbReference type="NCBIfam" id="TIGR00647">
    <property type="entry name" value="DNA_bind_WhiA"/>
    <property type="match status" value="1"/>
</dbReference>
<dbReference type="PANTHER" id="PTHR37307">
    <property type="entry name" value="CELL DIVISION PROTEIN WHIA-RELATED"/>
    <property type="match status" value="1"/>
</dbReference>
<dbReference type="PANTHER" id="PTHR37307:SF1">
    <property type="entry name" value="CELL DIVISION PROTEIN WHIA-RELATED"/>
    <property type="match status" value="1"/>
</dbReference>
<dbReference type="Pfam" id="PF02650">
    <property type="entry name" value="HTH_WhiA"/>
    <property type="match status" value="1"/>
</dbReference>
<dbReference type="Pfam" id="PF14527">
    <property type="entry name" value="LAGLIDADG_WhiA"/>
    <property type="match status" value="1"/>
</dbReference>
<dbReference type="Pfam" id="PF10298">
    <property type="entry name" value="WhiA_N"/>
    <property type="match status" value="1"/>
</dbReference>
<dbReference type="SUPFAM" id="SSF55608">
    <property type="entry name" value="Homing endonucleases"/>
    <property type="match status" value="1"/>
</dbReference>
<dbReference type="PROSITE" id="PS50819">
    <property type="entry name" value="INTEIN_ENDONUCLEASE"/>
    <property type="match status" value="1"/>
</dbReference>
<gene>
    <name evidence="1" type="primary">whiA</name>
    <name type="ordered locus">CLD_1133</name>
</gene>
<comment type="function">
    <text evidence="1">Involved in cell division and chromosome segregation.</text>
</comment>
<comment type="similarity">
    <text evidence="1">Belongs to the WhiA family.</text>
</comment>
<feature type="chain" id="PRO_0000376463" description="Probable cell division protein WhiA">
    <location>
        <begin position="1"/>
        <end position="315"/>
    </location>
</feature>
<feature type="DNA-binding region" description="H-T-H motif" evidence="1">
    <location>
        <begin position="280"/>
        <end position="313"/>
    </location>
</feature>
<keyword id="KW-0131">Cell cycle</keyword>
<keyword id="KW-0132">Cell division</keyword>
<keyword id="KW-0238">DNA-binding</keyword>
<sequence>MSFSLKVKNEVCKHVEVNKQEAIAELSAIMKVSGTLLFTNKQFNFKITTENAAIARLVFKILKEHFGIHTEIMIKKNNSLKKNNIYIILISEEEGVKSLLKEVGIIKETINVFSLDYNIPKSIIECDECRRAYIRGAFLGGGSISNPEKTYHLEFVTHNEEYAKDLSNLINSYNLNSKVIKRKNSYIIYLKEGEQIVDLLNIIGAHASLLELENVRIMKEMRNNVNRLVNCETANLSKTVNAAVRQVESIKFIEREIGLGRLPKNLRDVAELRIKYPDESLRELGKMLNPPVGKSGVNHRLRRIEKIADELKQGI</sequence>
<accession>B1IFW1</accession>
<organism>
    <name type="scientific">Clostridium botulinum (strain Okra / Type B1)</name>
    <dbReference type="NCBI Taxonomy" id="498213"/>
    <lineage>
        <taxon>Bacteria</taxon>
        <taxon>Bacillati</taxon>
        <taxon>Bacillota</taxon>
        <taxon>Clostridia</taxon>
        <taxon>Eubacteriales</taxon>
        <taxon>Clostridiaceae</taxon>
        <taxon>Clostridium</taxon>
    </lineage>
</organism>
<protein>
    <recommendedName>
        <fullName evidence="1">Probable cell division protein WhiA</fullName>
    </recommendedName>
</protein>
<proteinExistence type="inferred from homology"/>
<evidence type="ECO:0000255" key="1">
    <source>
        <dbReference type="HAMAP-Rule" id="MF_01420"/>
    </source>
</evidence>
<reference key="1">
    <citation type="journal article" date="2007" name="PLoS ONE">
        <title>Analysis of the neurotoxin complex genes in Clostridium botulinum A1-A4 and B1 strains: BoNT/A3, /Ba4 and /B1 clusters are located within plasmids.</title>
        <authorList>
            <person name="Smith T.J."/>
            <person name="Hill K.K."/>
            <person name="Foley B.T."/>
            <person name="Detter J.C."/>
            <person name="Munk A.C."/>
            <person name="Bruce D.C."/>
            <person name="Doggett N.A."/>
            <person name="Smith L.A."/>
            <person name="Marks J.D."/>
            <person name="Xie G."/>
            <person name="Brettin T.S."/>
        </authorList>
    </citation>
    <scope>NUCLEOTIDE SEQUENCE [LARGE SCALE GENOMIC DNA]</scope>
    <source>
        <strain>Okra / Type B1</strain>
    </source>
</reference>